<name>PRS33_MOUSE</name>
<comment type="function">
    <text evidence="1">Serine protease that has amidolytic activity, cleaving its substrates before Arg residues.</text>
</comment>
<comment type="subcellular location">
    <subcellularLocation>
        <location evidence="4">Secreted</location>
    </subcellularLocation>
</comment>
<comment type="alternative products">
    <event type="alternative splicing"/>
    <isoform>
        <id>Q80WM7-1</id>
        <name>1</name>
        <sequence type="displayed"/>
    </isoform>
    <isoform>
        <id>Q80WM7-2</id>
        <name>2</name>
        <sequence type="described" ref="VSP_027609"/>
    </isoform>
</comment>
<comment type="tissue specificity">
    <text evidence="4">Widely expressed.</text>
</comment>
<comment type="PTM">
    <text evidence="6">Not glycosylated.</text>
</comment>
<comment type="similarity">
    <text evidence="3">Belongs to the peptidase S1 family.</text>
</comment>
<dbReference type="EC" id="3.4.21.-"/>
<dbReference type="EMBL" id="AY262280">
    <property type="protein sequence ID" value="AAP20885.1"/>
    <property type="molecule type" value="mRNA"/>
</dbReference>
<dbReference type="EMBL" id="BC101950">
    <property type="protein sequence ID" value="AAI01951.1"/>
    <property type="molecule type" value="mRNA"/>
</dbReference>
<dbReference type="EMBL" id="BC103541">
    <property type="protein sequence ID" value="AAI03542.1"/>
    <property type="molecule type" value="mRNA"/>
</dbReference>
<dbReference type="EMBL" id="BC103542">
    <property type="protein sequence ID" value="AAI03543.1"/>
    <property type="molecule type" value="mRNA"/>
</dbReference>
<dbReference type="CCDS" id="CCDS37476.2">
    <molecule id="Q80WM7-1"/>
</dbReference>
<dbReference type="RefSeq" id="NP_001074868.2">
    <molecule id="Q80WM7-1"/>
    <property type="nucleotide sequence ID" value="NM_001081399.2"/>
</dbReference>
<dbReference type="RefSeq" id="XP_006524514.1">
    <molecule id="Q80WM7-2"/>
    <property type="nucleotide sequence ID" value="XM_006524451.3"/>
</dbReference>
<dbReference type="SMR" id="Q80WM7"/>
<dbReference type="FunCoup" id="Q80WM7">
    <property type="interactions" value="116"/>
</dbReference>
<dbReference type="STRING" id="10090.ENSMUSP00000059491"/>
<dbReference type="MEROPS" id="S01.075"/>
<dbReference type="PhosphoSitePlus" id="Q80WM7"/>
<dbReference type="SwissPalm" id="Q80WM7"/>
<dbReference type="PaxDb" id="10090-ENSMUSP00000059491"/>
<dbReference type="ProteomicsDB" id="291900">
    <molecule id="Q80WM7-1"/>
</dbReference>
<dbReference type="ProteomicsDB" id="291901">
    <molecule id="Q80WM7-2"/>
</dbReference>
<dbReference type="Antibodypedia" id="62205">
    <property type="antibodies" value="80 antibodies from 22 providers"/>
</dbReference>
<dbReference type="DNASU" id="353130"/>
<dbReference type="Ensembl" id="ENSMUST00000059906.8">
    <molecule id="Q80WM7-1"/>
    <property type="protein sequence ID" value="ENSMUSP00000059491.7"/>
    <property type="gene ID" value="ENSMUSG00000049620.10"/>
</dbReference>
<dbReference type="GeneID" id="353130"/>
<dbReference type="KEGG" id="mmu:353130"/>
<dbReference type="UCSC" id="uc008att.2">
    <molecule id="Q80WM7-1"/>
    <property type="organism name" value="mouse"/>
</dbReference>
<dbReference type="AGR" id="MGI:2661234"/>
<dbReference type="CTD" id="260429"/>
<dbReference type="MGI" id="MGI:2661234">
    <property type="gene designation" value="Prss33"/>
</dbReference>
<dbReference type="VEuPathDB" id="HostDB:ENSMUSG00000049620"/>
<dbReference type="eggNOG" id="KOG3627">
    <property type="taxonomic scope" value="Eukaryota"/>
</dbReference>
<dbReference type="GeneTree" id="ENSGT00940000162519"/>
<dbReference type="HOGENOM" id="CLU_006842_1_2_1"/>
<dbReference type="InParanoid" id="Q80WM7"/>
<dbReference type="OMA" id="DARTCDR"/>
<dbReference type="OrthoDB" id="546450at2759"/>
<dbReference type="PhylomeDB" id="Q80WM7"/>
<dbReference type="TreeFam" id="TF351676"/>
<dbReference type="BioGRID-ORCS" id="353130">
    <property type="hits" value="6 hits in 81 CRISPR screens"/>
</dbReference>
<dbReference type="PRO" id="PR:Q80WM7"/>
<dbReference type="Proteomes" id="UP000000589">
    <property type="component" value="Chromosome 17"/>
</dbReference>
<dbReference type="RNAct" id="Q80WM7">
    <property type="molecule type" value="protein"/>
</dbReference>
<dbReference type="Bgee" id="ENSMUSG00000049620">
    <property type="expression patterns" value="Expressed in blastoderm cell in morula and 28 other cell types or tissues"/>
</dbReference>
<dbReference type="ExpressionAtlas" id="Q80WM7">
    <property type="expression patterns" value="baseline and differential"/>
</dbReference>
<dbReference type="GO" id="GO:0005737">
    <property type="term" value="C:cytoplasm"/>
    <property type="evidence" value="ECO:0007669"/>
    <property type="project" value="Ensembl"/>
</dbReference>
<dbReference type="GO" id="GO:0005615">
    <property type="term" value="C:extracellular space"/>
    <property type="evidence" value="ECO:0000314"/>
    <property type="project" value="MGI"/>
</dbReference>
<dbReference type="GO" id="GO:0004252">
    <property type="term" value="F:serine-type endopeptidase activity"/>
    <property type="evidence" value="ECO:0007669"/>
    <property type="project" value="InterPro"/>
</dbReference>
<dbReference type="GO" id="GO:0008236">
    <property type="term" value="F:serine-type peptidase activity"/>
    <property type="evidence" value="ECO:0000314"/>
    <property type="project" value="MGI"/>
</dbReference>
<dbReference type="GO" id="GO:0006508">
    <property type="term" value="P:proteolysis"/>
    <property type="evidence" value="ECO:0000305"/>
    <property type="project" value="MGI"/>
</dbReference>
<dbReference type="CDD" id="cd00190">
    <property type="entry name" value="Tryp_SPc"/>
    <property type="match status" value="1"/>
</dbReference>
<dbReference type="FunFam" id="2.40.10.10:FF:000039">
    <property type="entry name" value="Brain-specific serine protease 4"/>
    <property type="match status" value="1"/>
</dbReference>
<dbReference type="Gene3D" id="2.40.10.10">
    <property type="entry name" value="Trypsin-like serine proteases"/>
    <property type="match status" value="1"/>
</dbReference>
<dbReference type="InterPro" id="IPR009003">
    <property type="entry name" value="Peptidase_S1_PA"/>
</dbReference>
<dbReference type="InterPro" id="IPR043504">
    <property type="entry name" value="Peptidase_S1_PA_chymotrypsin"/>
</dbReference>
<dbReference type="InterPro" id="IPR001314">
    <property type="entry name" value="Peptidase_S1A"/>
</dbReference>
<dbReference type="InterPro" id="IPR001254">
    <property type="entry name" value="Trypsin_dom"/>
</dbReference>
<dbReference type="InterPro" id="IPR018114">
    <property type="entry name" value="TRYPSIN_HIS"/>
</dbReference>
<dbReference type="InterPro" id="IPR033116">
    <property type="entry name" value="TRYPSIN_SER"/>
</dbReference>
<dbReference type="PANTHER" id="PTHR24253:SF58">
    <property type="entry name" value="SERINE PROTEASE 33"/>
    <property type="match status" value="1"/>
</dbReference>
<dbReference type="PANTHER" id="PTHR24253">
    <property type="entry name" value="TRANSMEMBRANE PROTEASE SERINE"/>
    <property type="match status" value="1"/>
</dbReference>
<dbReference type="Pfam" id="PF00089">
    <property type="entry name" value="Trypsin"/>
    <property type="match status" value="1"/>
</dbReference>
<dbReference type="PRINTS" id="PR00722">
    <property type="entry name" value="CHYMOTRYPSIN"/>
</dbReference>
<dbReference type="SMART" id="SM00020">
    <property type="entry name" value="Tryp_SPc"/>
    <property type="match status" value="1"/>
</dbReference>
<dbReference type="SUPFAM" id="SSF50494">
    <property type="entry name" value="Trypsin-like serine proteases"/>
    <property type="match status" value="1"/>
</dbReference>
<dbReference type="PROSITE" id="PS50240">
    <property type="entry name" value="TRYPSIN_DOM"/>
    <property type="match status" value="1"/>
</dbReference>
<dbReference type="PROSITE" id="PS00134">
    <property type="entry name" value="TRYPSIN_HIS"/>
    <property type="match status" value="1"/>
</dbReference>
<dbReference type="PROSITE" id="PS00135">
    <property type="entry name" value="TRYPSIN_SER"/>
    <property type="match status" value="1"/>
</dbReference>
<gene>
    <name type="primary">Prss33</name>
</gene>
<feature type="signal peptide" evidence="2">
    <location>
        <begin position="1"/>
        <end position="24"/>
    </location>
</feature>
<feature type="chain" id="PRO_0000299317" description="Serine protease 33">
    <location>
        <begin position="25"/>
        <end position="277"/>
    </location>
</feature>
<feature type="domain" description="Peptidase S1" evidence="3">
    <location>
        <begin position="34"/>
        <end position="276"/>
    </location>
</feature>
<feature type="active site" description="Charge relay system" evidence="1">
    <location>
        <position position="74"/>
    </location>
</feature>
<feature type="active site" description="Charge relay system" evidence="1">
    <location>
        <position position="123"/>
    </location>
</feature>
<feature type="active site" description="Charge relay system" evidence="1">
    <location>
        <position position="228"/>
    </location>
</feature>
<feature type="disulfide bond" evidence="3">
    <location>
        <begin position="59"/>
        <end position="75"/>
    </location>
</feature>
<feature type="disulfide bond" evidence="3">
    <location>
        <begin position="157"/>
        <end position="234"/>
    </location>
</feature>
<feature type="disulfide bond" evidence="3">
    <location>
        <begin position="190"/>
        <end position="213"/>
    </location>
</feature>
<feature type="disulfide bond" evidence="3">
    <location>
        <begin position="224"/>
        <end position="252"/>
    </location>
</feature>
<feature type="splice variant" id="VSP_027609" description="In isoform 2." evidence="5">
    <location>
        <begin position="1"/>
        <end position="18"/>
    </location>
</feature>
<protein>
    <recommendedName>
        <fullName>Serine protease 33</fullName>
        <ecNumber>3.4.21.-</ecNumber>
    </recommendedName>
    <alternativeName>
        <fullName>Tryptase-6</fullName>
        <shortName>mT6</shortName>
    </alternativeName>
</protein>
<proteinExistence type="evidence at transcript level"/>
<accession>Q80WM7</accession>
<accession>Q3ZB43</accession>
<reference key="1">
    <citation type="journal article" date="2004" name="J. Biol. Chem.">
        <title>Mouse chromosome 17A3.3 contains 13 genes that encode functional tryptic-like serine proteases with distinct tissue and cell expression patterns.</title>
        <authorList>
            <person name="Wong G.W."/>
            <person name="Yasuda S."/>
            <person name="Morokawa N."/>
            <person name="Li L."/>
            <person name="Stevens R.L."/>
        </authorList>
    </citation>
    <scope>NUCLEOTIDE SEQUENCE [MRNA] (ISOFORM 1)</scope>
    <scope>SUBCELLULAR LOCATION</scope>
    <scope>TISSUE SPECIFICITY</scope>
    <source>
        <strain>BALB/cJ</strain>
        <tissue>Testis</tissue>
    </source>
</reference>
<reference key="2">
    <citation type="journal article" date="2004" name="Genome Res.">
        <title>The status, quality, and expansion of the NIH full-length cDNA project: the Mammalian Gene Collection (MGC).</title>
        <authorList>
            <consortium name="The MGC Project Team"/>
        </authorList>
    </citation>
    <scope>NUCLEOTIDE SEQUENCE [LARGE SCALE MRNA] (ISOFORMS 1 AND 2)</scope>
</reference>
<keyword id="KW-0025">Alternative splicing</keyword>
<keyword id="KW-1015">Disulfide bond</keyword>
<keyword id="KW-0378">Hydrolase</keyword>
<keyword id="KW-0645">Protease</keyword>
<keyword id="KW-1185">Reference proteome</keyword>
<keyword id="KW-0964">Secreted</keyword>
<keyword id="KW-0720">Serine protease</keyword>
<keyword id="KW-0732">Signal</keyword>
<sequence length="277" mass="29888">MRGASHLQILLLLVLGTRMQECAACGQPRMSSRIVGGRDAQDGEWPWQTSIQHRGAHVCGGSLIAPQWVLTAGHCFPRRVWPSEYSVLLGALSLDVRSSHELLVPVLRVLLPPDYSEDEARGDLALLQLRHPVSLSTRIQPVCLPAPGSHPPPGSPCWVTGWGSLSPGVPLPKGRPLQGVRVPLLDSRACDRLYHVGANVPQGERIVLPGNLCAGYRRGHKDACQGDSGGPLTCMESGHWVLVGVVSWGKGCALPNRPGVYTNVAKYSPWIQARLSL</sequence>
<evidence type="ECO:0000250" key="1"/>
<evidence type="ECO:0000255" key="2"/>
<evidence type="ECO:0000255" key="3">
    <source>
        <dbReference type="PROSITE-ProRule" id="PRU00274"/>
    </source>
</evidence>
<evidence type="ECO:0000269" key="4">
    <source>
    </source>
</evidence>
<evidence type="ECO:0000303" key="5">
    <source>
    </source>
</evidence>
<evidence type="ECO:0000305" key="6"/>
<organism>
    <name type="scientific">Mus musculus</name>
    <name type="common">Mouse</name>
    <dbReference type="NCBI Taxonomy" id="10090"/>
    <lineage>
        <taxon>Eukaryota</taxon>
        <taxon>Metazoa</taxon>
        <taxon>Chordata</taxon>
        <taxon>Craniata</taxon>
        <taxon>Vertebrata</taxon>
        <taxon>Euteleostomi</taxon>
        <taxon>Mammalia</taxon>
        <taxon>Eutheria</taxon>
        <taxon>Euarchontoglires</taxon>
        <taxon>Glires</taxon>
        <taxon>Rodentia</taxon>
        <taxon>Myomorpha</taxon>
        <taxon>Muroidea</taxon>
        <taxon>Muridae</taxon>
        <taxon>Murinae</taxon>
        <taxon>Mus</taxon>
        <taxon>Mus</taxon>
    </lineage>
</organism>